<protein>
    <recommendedName>
        <fullName>UPF0213 protein SPs0786</fullName>
    </recommendedName>
</protein>
<evidence type="ECO:0000255" key="1">
    <source>
        <dbReference type="PROSITE-ProRule" id="PRU00977"/>
    </source>
</evidence>
<evidence type="ECO:0000305" key="2"/>
<accession>P0DG93</accession>
<accession>P67355</accession>
<accession>Q99Z40</accession>
<sequence length="92" mass="10735">MTTKKAYMYVLECVDKTLYTGYTTDLKKRLATHNAGKGAKYTRYRLPVSLLYYEVFDSKEAAMSAEALFKKRKTRSQKLAYIATHQKEKKNH</sequence>
<proteinExistence type="inferred from homology"/>
<reference key="1">
    <citation type="journal article" date="2003" name="Genome Res.">
        <title>Genome sequence of an M3 strain of Streptococcus pyogenes reveals a large-scale genomic rearrangement in invasive strains and new insights into phage evolution.</title>
        <authorList>
            <person name="Nakagawa I."/>
            <person name="Kurokawa K."/>
            <person name="Yamashita A."/>
            <person name="Nakata M."/>
            <person name="Tomiyasu Y."/>
            <person name="Okahashi N."/>
            <person name="Kawabata S."/>
            <person name="Yamazaki K."/>
            <person name="Shiba T."/>
            <person name="Yasunaga T."/>
            <person name="Hayashi H."/>
            <person name="Hattori M."/>
            <person name="Hamada S."/>
        </authorList>
    </citation>
    <scope>NUCLEOTIDE SEQUENCE [LARGE SCALE GENOMIC DNA]</scope>
    <source>
        <strain>SSI-1</strain>
    </source>
</reference>
<dbReference type="EMBL" id="BA000034">
    <property type="protein sequence ID" value="BAC63881.1"/>
    <property type="molecule type" value="Genomic_DNA"/>
</dbReference>
<dbReference type="RefSeq" id="WP_002989164.1">
    <property type="nucleotide sequence ID" value="NC_004606.1"/>
</dbReference>
<dbReference type="SMR" id="P0DG93"/>
<dbReference type="KEGG" id="sps:SPs0786"/>
<dbReference type="HOGENOM" id="CLU_135650_0_3_9"/>
<dbReference type="CDD" id="cd10456">
    <property type="entry name" value="GIY-YIG_UPF0213"/>
    <property type="match status" value="1"/>
</dbReference>
<dbReference type="Gene3D" id="3.40.1440.10">
    <property type="entry name" value="GIY-YIG endonuclease"/>
    <property type="match status" value="1"/>
</dbReference>
<dbReference type="InterPro" id="IPR000305">
    <property type="entry name" value="GIY-YIG_endonuc"/>
</dbReference>
<dbReference type="InterPro" id="IPR035901">
    <property type="entry name" value="GIY-YIG_endonuc_sf"/>
</dbReference>
<dbReference type="InterPro" id="IPR050190">
    <property type="entry name" value="UPF0213_domain"/>
</dbReference>
<dbReference type="PANTHER" id="PTHR34477">
    <property type="entry name" value="UPF0213 PROTEIN YHBQ"/>
    <property type="match status" value="1"/>
</dbReference>
<dbReference type="PANTHER" id="PTHR34477:SF1">
    <property type="entry name" value="UPF0213 PROTEIN YHBQ"/>
    <property type="match status" value="1"/>
</dbReference>
<dbReference type="Pfam" id="PF01541">
    <property type="entry name" value="GIY-YIG"/>
    <property type="match status" value="1"/>
</dbReference>
<dbReference type="SUPFAM" id="SSF82771">
    <property type="entry name" value="GIY-YIG endonuclease"/>
    <property type="match status" value="1"/>
</dbReference>
<dbReference type="PROSITE" id="PS50164">
    <property type="entry name" value="GIY_YIG"/>
    <property type="match status" value="1"/>
</dbReference>
<feature type="chain" id="PRO_0000411636" description="UPF0213 protein SPs0786">
    <location>
        <begin position="1"/>
        <end position="92"/>
    </location>
</feature>
<feature type="domain" description="GIY-YIG" evidence="1">
    <location>
        <begin position="4"/>
        <end position="80"/>
    </location>
</feature>
<organism>
    <name type="scientific">Streptococcus pyogenes serotype M3 (strain SSI-1)</name>
    <dbReference type="NCBI Taxonomy" id="193567"/>
    <lineage>
        <taxon>Bacteria</taxon>
        <taxon>Bacillati</taxon>
        <taxon>Bacillota</taxon>
        <taxon>Bacilli</taxon>
        <taxon>Lactobacillales</taxon>
        <taxon>Streptococcaceae</taxon>
        <taxon>Streptococcus</taxon>
    </lineage>
</organism>
<comment type="similarity">
    <text evidence="2">Belongs to the UPF0213 family.</text>
</comment>
<name>Y1077_STRPQ</name>
<gene>
    <name type="ordered locus">SPs0786</name>
</gene>